<dbReference type="EC" id="1.14.99.60" evidence="1"/>
<dbReference type="EMBL" id="CP000868">
    <property type="protein sequence ID" value="ABX16530.1"/>
    <property type="molecule type" value="Genomic_DNA"/>
</dbReference>
<dbReference type="EMBL" id="AP009385">
    <property type="protein sequence ID" value="BAG42360.1"/>
    <property type="molecule type" value="Genomic_DNA"/>
</dbReference>
<dbReference type="RefSeq" id="WP_006415856.1">
    <property type="nucleotide sequence ID" value="NC_010084.1"/>
</dbReference>
<dbReference type="SMR" id="A9AJ26"/>
<dbReference type="STRING" id="395019.BMULJ_00392"/>
<dbReference type="KEGG" id="bmj:BMULJ_00392"/>
<dbReference type="KEGG" id="bmu:Bmul_2846"/>
<dbReference type="eggNOG" id="COG2941">
    <property type="taxonomic scope" value="Bacteria"/>
</dbReference>
<dbReference type="HOGENOM" id="CLU_088601_0_0_4"/>
<dbReference type="UniPathway" id="UPA00232"/>
<dbReference type="Proteomes" id="UP000008815">
    <property type="component" value="Chromosome 1"/>
</dbReference>
<dbReference type="GO" id="GO:0005886">
    <property type="term" value="C:plasma membrane"/>
    <property type="evidence" value="ECO:0007669"/>
    <property type="project" value="UniProtKB-SubCell"/>
</dbReference>
<dbReference type="GO" id="GO:0008682">
    <property type="term" value="F:3-demethoxyubiquinol 3-hydroxylase activity"/>
    <property type="evidence" value="ECO:0007669"/>
    <property type="project" value="UniProtKB-EC"/>
</dbReference>
<dbReference type="GO" id="GO:0046872">
    <property type="term" value="F:metal ion binding"/>
    <property type="evidence" value="ECO:0007669"/>
    <property type="project" value="UniProtKB-KW"/>
</dbReference>
<dbReference type="GO" id="GO:0006744">
    <property type="term" value="P:ubiquinone biosynthetic process"/>
    <property type="evidence" value="ECO:0007669"/>
    <property type="project" value="UniProtKB-UniRule"/>
</dbReference>
<dbReference type="CDD" id="cd01042">
    <property type="entry name" value="DMQH"/>
    <property type="match status" value="1"/>
</dbReference>
<dbReference type="Gene3D" id="1.20.1260.10">
    <property type="match status" value="1"/>
</dbReference>
<dbReference type="HAMAP" id="MF_01658">
    <property type="entry name" value="COQ7"/>
    <property type="match status" value="1"/>
</dbReference>
<dbReference type="InterPro" id="IPR047809">
    <property type="entry name" value="COQ7_proteobact"/>
</dbReference>
<dbReference type="InterPro" id="IPR012347">
    <property type="entry name" value="Ferritin-like"/>
</dbReference>
<dbReference type="InterPro" id="IPR009078">
    <property type="entry name" value="Ferritin-like_SF"/>
</dbReference>
<dbReference type="InterPro" id="IPR011566">
    <property type="entry name" value="Ubq_synth_Coq7"/>
</dbReference>
<dbReference type="NCBIfam" id="NF033656">
    <property type="entry name" value="DMQ_monoox_COQ7"/>
    <property type="match status" value="1"/>
</dbReference>
<dbReference type="PANTHER" id="PTHR11237:SF4">
    <property type="entry name" value="5-DEMETHOXYUBIQUINONE HYDROXYLASE, MITOCHONDRIAL"/>
    <property type="match status" value="1"/>
</dbReference>
<dbReference type="PANTHER" id="PTHR11237">
    <property type="entry name" value="COENZYME Q10 BIOSYNTHESIS PROTEIN 7"/>
    <property type="match status" value="1"/>
</dbReference>
<dbReference type="Pfam" id="PF03232">
    <property type="entry name" value="COQ7"/>
    <property type="match status" value="1"/>
</dbReference>
<dbReference type="SUPFAM" id="SSF47240">
    <property type="entry name" value="Ferritin-like"/>
    <property type="match status" value="1"/>
</dbReference>
<protein>
    <recommendedName>
        <fullName evidence="1">3-demethoxyubiquinol 3-hydroxylase</fullName>
        <shortName evidence="1">DMQ hydroxylase</shortName>
        <ecNumber evidence="1">1.14.99.60</ecNumber>
    </recommendedName>
    <alternativeName>
        <fullName evidence="1">2-nonaprenyl-3-methyl-6-methoxy-1,4-benzoquinol hydroxylase</fullName>
    </alternativeName>
</protein>
<proteinExistence type="inferred from homology"/>
<name>COQ7_BURM1</name>
<feature type="chain" id="PRO_1000187045" description="3-demethoxyubiquinol 3-hydroxylase">
    <location>
        <begin position="1"/>
        <end position="208"/>
    </location>
</feature>
<feature type="binding site" evidence="1">
    <location>
        <position position="57"/>
    </location>
    <ligand>
        <name>Fe cation</name>
        <dbReference type="ChEBI" id="CHEBI:24875"/>
        <label>1</label>
    </ligand>
</feature>
<feature type="binding site" evidence="1">
    <location>
        <position position="87"/>
    </location>
    <ligand>
        <name>Fe cation</name>
        <dbReference type="ChEBI" id="CHEBI:24875"/>
        <label>1</label>
    </ligand>
</feature>
<feature type="binding site" evidence="1">
    <location>
        <position position="87"/>
    </location>
    <ligand>
        <name>Fe cation</name>
        <dbReference type="ChEBI" id="CHEBI:24875"/>
        <label>2</label>
    </ligand>
</feature>
<feature type="binding site" evidence="1">
    <location>
        <position position="90"/>
    </location>
    <ligand>
        <name>Fe cation</name>
        <dbReference type="ChEBI" id="CHEBI:24875"/>
        <label>1</label>
    </ligand>
</feature>
<feature type="binding site" evidence="1">
    <location>
        <position position="139"/>
    </location>
    <ligand>
        <name>Fe cation</name>
        <dbReference type="ChEBI" id="CHEBI:24875"/>
        <label>2</label>
    </ligand>
</feature>
<feature type="binding site" evidence="1">
    <location>
        <position position="171"/>
    </location>
    <ligand>
        <name>Fe cation</name>
        <dbReference type="ChEBI" id="CHEBI:24875"/>
        <label>1</label>
    </ligand>
</feature>
<feature type="binding site" evidence="1">
    <location>
        <position position="171"/>
    </location>
    <ligand>
        <name>Fe cation</name>
        <dbReference type="ChEBI" id="CHEBI:24875"/>
        <label>2</label>
    </ligand>
</feature>
<feature type="binding site" evidence="1">
    <location>
        <position position="174"/>
    </location>
    <ligand>
        <name>Fe cation</name>
        <dbReference type="ChEBI" id="CHEBI:24875"/>
        <label>2</label>
    </ligand>
</feature>
<gene>
    <name evidence="1" type="primary">coq7</name>
    <name type="ordered locus">Bmul_2846</name>
    <name type="ordered locus">BMULJ_00392</name>
</gene>
<comment type="function">
    <text evidence="1">Catalyzes the hydroxylation of 2-nonaprenyl-3-methyl-6-methoxy-1,4-benzoquinol during ubiquinone biosynthesis.</text>
</comment>
<comment type="catalytic activity">
    <reaction evidence="1">
        <text>a 5-methoxy-2-methyl-3-(all-trans-polyprenyl)benzene-1,4-diol + AH2 + O2 = a 3-demethylubiquinol + A + H2O</text>
        <dbReference type="Rhea" id="RHEA:50908"/>
        <dbReference type="Rhea" id="RHEA-COMP:10859"/>
        <dbReference type="Rhea" id="RHEA-COMP:10914"/>
        <dbReference type="ChEBI" id="CHEBI:13193"/>
        <dbReference type="ChEBI" id="CHEBI:15377"/>
        <dbReference type="ChEBI" id="CHEBI:15379"/>
        <dbReference type="ChEBI" id="CHEBI:17499"/>
        <dbReference type="ChEBI" id="CHEBI:84167"/>
        <dbReference type="ChEBI" id="CHEBI:84422"/>
        <dbReference type="EC" id="1.14.99.60"/>
    </reaction>
</comment>
<comment type="cofactor">
    <cofactor evidence="1">
        <name>Fe cation</name>
        <dbReference type="ChEBI" id="CHEBI:24875"/>
    </cofactor>
    <text evidence="1">Binds 2 iron ions per subunit.</text>
</comment>
<comment type="pathway">
    <text evidence="1">Cofactor biosynthesis; ubiquinone biosynthesis.</text>
</comment>
<comment type="subcellular location">
    <subcellularLocation>
        <location evidence="1">Cell membrane</location>
        <topology evidence="1">Peripheral membrane protein</topology>
    </subcellularLocation>
</comment>
<comment type="similarity">
    <text evidence="1">Belongs to the COQ7 family.</text>
</comment>
<reference key="1">
    <citation type="submission" date="2007-10" db="EMBL/GenBank/DDBJ databases">
        <title>Complete sequence of chromosome 1 of Burkholderia multivorans ATCC 17616.</title>
        <authorList>
            <person name="Copeland A."/>
            <person name="Lucas S."/>
            <person name="Lapidus A."/>
            <person name="Barry K."/>
            <person name="Glavina del Rio T."/>
            <person name="Dalin E."/>
            <person name="Tice H."/>
            <person name="Pitluck S."/>
            <person name="Chain P."/>
            <person name="Malfatti S."/>
            <person name="Shin M."/>
            <person name="Vergez L."/>
            <person name="Schmutz J."/>
            <person name="Larimer F."/>
            <person name="Land M."/>
            <person name="Hauser L."/>
            <person name="Kyrpides N."/>
            <person name="Kim E."/>
            <person name="Tiedje J."/>
            <person name="Richardson P."/>
        </authorList>
    </citation>
    <scope>NUCLEOTIDE SEQUENCE [LARGE SCALE GENOMIC DNA]</scope>
    <source>
        <strain>ATCC 17616 / 249</strain>
    </source>
</reference>
<reference key="2">
    <citation type="submission" date="2007-04" db="EMBL/GenBank/DDBJ databases">
        <title>Complete genome sequence of Burkholderia multivorans ATCC 17616.</title>
        <authorList>
            <person name="Ohtsubo Y."/>
            <person name="Yamashita A."/>
            <person name="Kurokawa K."/>
            <person name="Takami H."/>
            <person name="Yuhara S."/>
            <person name="Nishiyama E."/>
            <person name="Endo R."/>
            <person name="Miyazaki R."/>
            <person name="Ono A."/>
            <person name="Yano K."/>
            <person name="Ito M."/>
            <person name="Sota M."/>
            <person name="Yuji N."/>
            <person name="Hattori M."/>
            <person name="Tsuda M."/>
        </authorList>
    </citation>
    <scope>NUCLEOTIDE SEQUENCE [LARGE SCALE GENOMIC DNA]</scope>
    <source>
        <strain>ATCC 17616 / 249</strain>
    </source>
</reference>
<organism>
    <name type="scientific">Burkholderia multivorans (strain ATCC 17616 / 249)</name>
    <dbReference type="NCBI Taxonomy" id="395019"/>
    <lineage>
        <taxon>Bacteria</taxon>
        <taxon>Pseudomonadati</taxon>
        <taxon>Pseudomonadota</taxon>
        <taxon>Betaproteobacteria</taxon>
        <taxon>Burkholderiales</taxon>
        <taxon>Burkholderiaceae</taxon>
        <taxon>Burkholderia</taxon>
        <taxon>Burkholderia cepacia complex</taxon>
    </lineage>
</organism>
<sequence>MVLDELISEFDRGLRSLTGISRMSRPVPAPAEAPAAELTPAERTHAAGLMRVNHVGEVCAQALYQAQKLTARSSAAKAMFEEAAREEEDHLAWTAHRLKELDSRPSVLNPLWYAGALAIGVAAGTLGDKVSLGFMAETERQVESHLDGHLSDLPAGDTASRAIVEQMRADEAKHGKAATDAGGIELPLPARMLMRAASKIMTRTAYYL</sequence>
<evidence type="ECO:0000255" key="1">
    <source>
        <dbReference type="HAMAP-Rule" id="MF_01658"/>
    </source>
</evidence>
<accession>A9AJ26</accession>
<keyword id="KW-1003">Cell membrane</keyword>
<keyword id="KW-0408">Iron</keyword>
<keyword id="KW-0472">Membrane</keyword>
<keyword id="KW-0479">Metal-binding</keyword>
<keyword id="KW-0503">Monooxygenase</keyword>
<keyword id="KW-0560">Oxidoreductase</keyword>
<keyword id="KW-1185">Reference proteome</keyword>
<keyword id="KW-0831">Ubiquinone biosynthesis</keyword>